<organism>
    <name type="scientific">Archaeoglobus fulgidus (strain ATCC 49558 / DSM 4304 / JCM 9628 / NBRC 100126 / VC-16)</name>
    <dbReference type="NCBI Taxonomy" id="224325"/>
    <lineage>
        <taxon>Archaea</taxon>
        <taxon>Methanobacteriati</taxon>
        <taxon>Methanobacteriota</taxon>
        <taxon>Archaeoglobi</taxon>
        <taxon>Archaeoglobales</taxon>
        <taxon>Archaeoglobaceae</taxon>
        <taxon>Archaeoglobus</taxon>
    </lineage>
</organism>
<evidence type="ECO:0000305" key="1"/>
<sequence length="492" mass="55260">MIGVIDAGTTTIKLAVYDEDKLVAIKKEPVVKHNPKPGWVEIDAEDLARKCVSFADTAIDEYGVEVIAITNQRTTAVLWDGKTGRPVFNALGWQDMRANALAEEMNRDSTIRMARTAGMIARGVVKLLPTLKNKRRVKWLITLSRLSIRPNHTSVKLCWMLRELGEKKEKYDLKAGTVDSWLVYRLTGEHLTDYSNAAATGLYDSYYLRWSEPILKIVGADEEMLPKTLESDRIFGEYRNVPVTGVIADQSASLYALGCWEEGDIKATNGTGTFVDLNVGEEPQASPGGLLPLIAWKLKSEMRYMMEGMLFYSGSAVEKLKEIGIYDDVSKTSEMAFRSKNDDMLLIPSFTGLATPHYVSVPGLLYGISNAMTREDIVKALLESIAFRIAEIVEIMRKEFPYETDRIRCDGEMSSNDFFLQRIADVTGLKVERGAVLSGTSFGAHLVAGRALGKWKKDFCMPFDKVFEPSLDLSEKYRRWKRLLEISKKLKV</sequence>
<comment type="similarity">
    <text evidence="1">Belongs to the FGGY kinase family.</text>
</comment>
<gene>
    <name type="ordered locus">AF_0866</name>
</gene>
<name>Y866_ARCFU</name>
<keyword id="KW-0418">Kinase</keyword>
<keyword id="KW-1185">Reference proteome</keyword>
<keyword id="KW-0808">Transferase</keyword>
<feature type="chain" id="PRO_0000059568" description="Uncharacterized sugar kinase AF_0866">
    <location>
        <begin position="1"/>
        <end position="492"/>
    </location>
</feature>
<protein>
    <recommendedName>
        <fullName>Uncharacterized sugar kinase AF_0866</fullName>
        <ecNumber>2.7.1.-</ecNumber>
    </recommendedName>
</protein>
<proteinExistence type="inferred from homology"/>
<accession>O29395</accession>
<reference key="1">
    <citation type="journal article" date="1997" name="Nature">
        <title>The complete genome sequence of the hyperthermophilic, sulphate-reducing archaeon Archaeoglobus fulgidus.</title>
        <authorList>
            <person name="Klenk H.-P."/>
            <person name="Clayton R.A."/>
            <person name="Tomb J.-F."/>
            <person name="White O."/>
            <person name="Nelson K.E."/>
            <person name="Ketchum K.A."/>
            <person name="Dodson R.J."/>
            <person name="Gwinn M.L."/>
            <person name="Hickey E.K."/>
            <person name="Peterson J.D."/>
            <person name="Richardson D.L."/>
            <person name="Kerlavage A.R."/>
            <person name="Graham D.E."/>
            <person name="Kyrpides N.C."/>
            <person name="Fleischmann R.D."/>
            <person name="Quackenbush J."/>
            <person name="Lee N.H."/>
            <person name="Sutton G.G."/>
            <person name="Gill S.R."/>
            <person name="Kirkness E.F."/>
            <person name="Dougherty B.A."/>
            <person name="McKenney K."/>
            <person name="Adams M.D."/>
            <person name="Loftus B.J."/>
            <person name="Peterson S.N."/>
            <person name="Reich C.I."/>
            <person name="McNeil L.K."/>
            <person name="Badger J.H."/>
            <person name="Glodek A."/>
            <person name="Zhou L."/>
            <person name="Overbeek R."/>
            <person name="Gocayne J.D."/>
            <person name="Weidman J.F."/>
            <person name="McDonald L.A."/>
            <person name="Utterback T.R."/>
            <person name="Cotton M.D."/>
            <person name="Spriggs T."/>
            <person name="Artiach P."/>
            <person name="Kaine B.P."/>
            <person name="Sykes S.M."/>
            <person name="Sadow P.W."/>
            <person name="D'Andrea K.P."/>
            <person name="Bowman C."/>
            <person name="Fujii C."/>
            <person name="Garland S.A."/>
            <person name="Mason T.M."/>
            <person name="Olsen G.J."/>
            <person name="Fraser C.M."/>
            <person name="Smith H.O."/>
            <person name="Woese C.R."/>
            <person name="Venter J.C."/>
        </authorList>
    </citation>
    <scope>NUCLEOTIDE SEQUENCE [LARGE SCALE GENOMIC DNA]</scope>
    <source>
        <strain>ATCC 49558 / DSM 4304 / JCM 9628 / NBRC 100126 / VC-16</strain>
    </source>
</reference>
<dbReference type="EC" id="2.7.1.-"/>
<dbReference type="EMBL" id="AE000782">
    <property type="protein sequence ID" value="AAB90370.1"/>
    <property type="molecule type" value="Genomic_DNA"/>
</dbReference>
<dbReference type="PIR" id="B69358">
    <property type="entry name" value="B69358"/>
</dbReference>
<dbReference type="RefSeq" id="WP_010878367.1">
    <property type="nucleotide sequence ID" value="NC_000917.1"/>
</dbReference>
<dbReference type="SMR" id="O29395"/>
<dbReference type="STRING" id="224325.AF_0866"/>
<dbReference type="PaxDb" id="224325-AF_0866"/>
<dbReference type="EnsemblBacteria" id="AAB90370">
    <property type="protein sequence ID" value="AAB90370"/>
    <property type="gene ID" value="AF_0866"/>
</dbReference>
<dbReference type="GeneID" id="1484086"/>
<dbReference type="KEGG" id="afu:AF_0866"/>
<dbReference type="eggNOG" id="arCOG00024">
    <property type="taxonomic scope" value="Archaea"/>
</dbReference>
<dbReference type="HOGENOM" id="CLU_009281_2_3_2"/>
<dbReference type="OrthoDB" id="26592at2157"/>
<dbReference type="PhylomeDB" id="O29395"/>
<dbReference type="Proteomes" id="UP000002199">
    <property type="component" value="Chromosome"/>
</dbReference>
<dbReference type="GO" id="GO:0016301">
    <property type="term" value="F:kinase activity"/>
    <property type="evidence" value="ECO:0007669"/>
    <property type="project" value="UniProtKB-KW"/>
</dbReference>
<dbReference type="GO" id="GO:0016773">
    <property type="term" value="F:phosphotransferase activity, alcohol group as acceptor"/>
    <property type="evidence" value="ECO:0007669"/>
    <property type="project" value="InterPro"/>
</dbReference>
<dbReference type="GO" id="GO:0006071">
    <property type="term" value="P:glycerol metabolic process"/>
    <property type="evidence" value="ECO:0007669"/>
    <property type="project" value="TreeGrafter"/>
</dbReference>
<dbReference type="GO" id="GO:0046167">
    <property type="term" value="P:glycerol-3-phosphate biosynthetic process"/>
    <property type="evidence" value="ECO:0007669"/>
    <property type="project" value="TreeGrafter"/>
</dbReference>
<dbReference type="GO" id="GO:0006641">
    <property type="term" value="P:triglyceride metabolic process"/>
    <property type="evidence" value="ECO:0007669"/>
    <property type="project" value="TreeGrafter"/>
</dbReference>
<dbReference type="Gene3D" id="3.30.420.40">
    <property type="match status" value="2"/>
</dbReference>
<dbReference type="InterPro" id="IPR043129">
    <property type="entry name" value="ATPase_NBD"/>
</dbReference>
<dbReference type="InterPro" id="IPR000577">
    <property type="entry name" value="Carb_kinase_FGGY"/>
</dbReference>
<dbReference type="InterPro" id="IPR018483">
    <property type="entry name" value="Carb_kinase_FGGY_CS"/>
</dbReference>
<dbReference type="InterPro" id="IPR018485">
    <property type="entry name" value="FGGY_C"/>
</dbReference>
<dbReference type="InterPro" id="IPR018484">
    <property type="entry name" value="FGGY_N"/>
</dbReference>
<dbReference type="PANTHER" id="PTHR10196:SF68">
    <property type="entry name" value="GLYCEROL KINASE 5-RELATED"/>
    <property type="match status" value="1"/>
</dbReference>
<dbReference type="PANTHER" id="PTHR10196">
    <property type="entry name" value="SUGAR KINASE"/>
    <property type="match status" value="1"/>
</dbReference>
<dbReference type="Pfam" id="PF02782">
    <property type="entry name" value="FGGY_C"/>
    <property type="match status" value="1"/>
</dbReference>
<dbReference type="Pfam" id="PF00370">
    <property type="entry name" value="FGGY_N"/>
    <property type="match status" value="2"/>
</dbReference>
<dbReference type="PIRSF" id="PIRSF000538">
    <property type="entry name" value="GlpK"/>
    <property type="match status" value="1"/>
</dbReference>
<dbReference type="SUPFAM" id="SSF53067">
    <property type="entry name" value="Actin-like ATPase domain"/>
    <property type="match status" value="2"/>
</dbReference>
<dbReference type="PROSITE" id="PS00445">
    <property type="entry name" value="FGGY_KINASES_2"/>
    <property type="match status" value="1"/>
</dbReference>